<accession>O02298</accession>
<protein>
    <recommendedName>
        <fullName>Soluble guanylate cyclase gcy-35</fullName>
        <ecNumber>4.6.1.2</ecNumber>
    </recommendedName>
</protein>
<dbReference type="EC" id="4.6.1.2"/>
<dbReference type="EMBL" id="AY652944">
    <property type="protein sequence ID" value="AAT73711.1"/>
    <property type="molecule type" value="mRNA"/>
</dbReference>
<dbReference type="EMBL" id="Z81114">
    <property type="protein sequence ID" value="CAB03288.2"/>
    <property type="molecule type" value="Genomic_DNA"/>
</dbReference>
<dbReference type="PIR" id="T24458">
    <property type="entry name" value="T24458"/>
</dbReference>
<dbReference type="RefSeq" id="NP_001252131.1">
    <property type="nucleotide sequence ID" value="NM_001265202.3"/>
</dbReference>
<dbReference type="SMR" id="O02298"/>
<dbReference type="BioGRID" id="38597">
    <property type="interactions" value="2"/>
</dbReference>
<dbReference type="FunCoup" id="O02298">
    <property type="interactions" value="95"/>
</dbReference>
<dbReference type="STRING" id="6239.T04D3.4a.1"/>
<dbReference type="PaxDb" id="6239-T04D3.4a"/>
<dbReference type="EnsemblMetazoa" id="T04D3.4a.1">
    <property type="protein sequence ID" value="T04D3.4a.1"/>
    <property type="gene ID" value="WBGene00001555"/>
</dbReference>
<dbReference type="GeneID" id="173202"/>
<dbReference type="KEGG" id="cel:CELE_T04D3.4"/>
<dbReference type="UCSC" id="T04D3.4">
    <property type="organism name" value="c. elegans"/>
</dbReference>
<dbReference type="AGR" id="WB:WBGene00001555"/>
<dbReference type="CTD" id="173202"/>
<dbReference type="WormBase" id="T04D3.4a">
    <property type="protein sequence ID" value="CE34497"/>
    <property type="gene ID" value="WBGene00001555"/>
    <property type="gene designation" value="gcy-35"/>
</dbReference>
<dbReference type="eggNOG" id="KOG4171">
    <property type="taxonomic scope" value="Eukaryota"/>
</dbReference>
<dbReference type="HOGENOM" id="CLU_011614_4_0_1"/>
<dbReference type="InParanoid" id="O02298"/>
<dbReference type="OMA" id="RDEITMQ"/>
<dbReference type="OrthoDB" id="1890790at2759"/>
<dbReference type="PhylomeDB" id="O02298"/>
<dbReference type="PRO" id="PR:O02298"/>
<dbReference type="Proteomes" id="UP000001940">
    <property type="component" value="Chromosome I"/>
</dbReference>
<dbReference type="Bgee" id="WBGene00001555">
    <property type="expression patterns" value="Expressed in larva and 3 other cell types or tissues"/>
</dbReference>
<dbReference type="ExpressionAtlas" id="O02298">
    <property type="expression patterns" value="baseline"/>
</dbReference>
<dbReference type="GO" id="GO:0030425">
    <property type="term" value="C:dendrite"/>
    <property type="evidence" value="ECO:0000314"/>
    <property type="project" value="WormBase"/>
</dbReference>
<dbReference type="GO" id="GO:0008074">
    <property type="term" value="C:guanylate cyclase complex, soluble"/>
    <property type="evidence" value="ECO:0000318"/>
    <property type="project" value="GO_Central"/>
</dbReference>
<dbReference type="GO" id="GO:0043025">
    <property type="term" value="C:neuronal cell body"/>
    <property type="evidence" value="ECO:0000314"/>
    <property type="project" value="WormBase"/>
</dbReference>
<dbReference type="GO" id="GO:0070025">
    <property type="term" value="F:carbon monoxide binding"/>
    <property type="evidence" value="ECO:0000314"/>
    <property type="project" value="WormBase"/>
</dbReference>
<dbReference type="GO" id="GO:0005525">
    <property type="term" value="F:GTP binding"/>
    <property type="evidence" value="ECO:0007669"/>
    <property type="project" value="UniProtKB-KW"/>
</dbReference>
<dbReference type="GO" id="GO:0004383">
    <property type="term" value="F:guanylate cyclase activity"/>
    <property type="evidence" value="ECO:0000318"/>
    <property type="project" value="GO_Central"/>
</dbReference>
<dbReference type="GO" id="GO:0020037">
    <property type="term" value="F:heme binding"/>
    <property type="evidence" value="ECO:0007669"/>
    <property type="project" value="InterPro"/>
</dbReference>
<dbReference type="GO" id="GO:0046872">
    <property type="term" value="F:metal ion binding"/>
    <property type="evidence" value="ECO:0007669"/>
    <property type="project" value="UniProtKB-KW"/>
</dbReference>
<dbReference type="GO" id="GO:0070026">
    <property type="term" value="F:nitric oxide binding"/>
    <property type="evidence" value="ECO:0000314"/>
    <property type="project" value="WormBase"/>
</dbReference>
<dbReference type="GO" id="GO:0019825">
    <property type="term" value="F:oxygen binding"/>
    <property type="evidence" value="ECO:0000314"/>
    <property type="project" value="WormBase"/>
</dbReference>
<dbReference type="GO" id="GO:0019826">
    <property type="term" value="F:oxygen sensor activity"/>
    <property type="evidence" value="ECO:0000315"/>
    <property type="project" value="WormBase"/>
</dbReference>
<dbReference type="GO" id="GO:0009454">
    <property type="term" value="P:aerotaxis"/>
    <property type="evidence" value="ECO:0000315"/>
    <property type="project" value="WormBase"/>
</dbReference>
<dbReference type="GO" id="GO:0019934">
    <property type="term" value="P:cGMP-mediated signaling"/>
    <property type="evidence" value="ECO:0000315"/>
    <property type="project" value="WormBase"/>
</dbReference>
<dbReference type="GO" id="GO:0050829">
    <property type="term" value="P:defense response to Gram-negative bacterium"/>
    <property type="evidence" value="ECO:0000316"/>
    <property type="project" value="WormBase"/>
</dbReference>
<dbReference type="GO" id="GO:0055093">
    <property type="term" value="P:response to hyperoxia"/>
    <property type="evidence" value="ECO:0000315"/>
    <property type="project" value="WormBase"/>
</dbReference>
<dbReference type="GO" id="GO:0070482">
    <property type="term" value="P:response to oxygen levels"/>
    <property type="evidence" value="ECO:0000315"/>
    <property type="project" value="WormBase"/>
</dbReference>
<dbReference type="CDD" id="cd07302">
    <property type="entry name" value="CHD"/>
    <property type="match status" value="1"/>
</dbReference>
<dbReference type="FunFam" id="3.30.450.260:FF:000002">
    <property type="entry name" value="guanylate cyclase soluble subunit alpha-2"/>
    <property type="match status" value="1"/>
</dbReference>
<dbReference type="FunFam" id="3.30.70.1230:FF:000007">
    <property type="entry name" value="Guanylate cyclase soluble subunit alpha-3"/>
    <property type="match status" value="1"/>
</dbReference>
<dbReference type="FunFam" id="3.90.1520.10:FF:000005">
    <property type="entry name" value="Soluble guanylate cyclase gcy-36"/>
    <property type="match status" value="1"/>
</dbReference>
<dbReference type="Gene3D" id="6.10.250.780">
    <property type="match status" value="1"/>
</dbReference>
<dbReference type="Gene3D" id="3.90.1520.10">
    <property type="entry name" value="H-NOX domain"/>
    <property type="match status" value="1"/>
</dbReference>
<dbReference type="Gene3D" id="3.30.450.260">
    <property type="entry name" value="Haem NO binding associated domain"/>
    <property type="match status" value="1"/>
</dbReference>
<dbReference type="Gene3D" id="3.30.70.1230">
    <property type="entry name" value="Nucleotide cyclase"/>
    <property type="match status" value="1"/>
</dbReference>
<dbReference type="InterPro" id="IPR001054">
    <property type="entry name" value="A/G_cyclase"/>
</dbReference>
<dbReference type="InterPro" id="IPR018297">
    <property type="entry name" value="A/G_cyclase_CS"/>
</dbReference>
<dbReference type="InterPro" id="IPR038158">
    <property type="entry name" value="H-NOX_domain_sf"/>
</dbReference>
<dbReference type="InterPro" id="IPR011644">
    <property type="entry name" value="Heme_NO-bd"/>
</dbReference>
<dbReference type="InterPro" id="IPR011645">
    <property type="entry name" value="HNOB_dom_associated"/>
</dbReference>
<dbReference type="InterPro" id="IPR042463">
    <property type="entry name" value="HNOB_dom_associated_sf"/>
</dbReference>
<dbReference type="InterPro" id="IPR024096">
    <property type="entry name" value="NO_sig/Golgi_transp_ligand-bd"/>
</dbReference>
<dbReference type="InterPro" id="IPR029787">
    <property type="entry name" value="Nucleotide_cyclase"/>
</dbReference>
<dbReference type="PANTHER" id="PTHR45655">
    <property type="entry name" value="GUANYLATE CYCLASE SOLUBLE SUBUNIT BETA-2"/>
    <property type="match status" value="1"/>
</dbReference>
<dbReference type="PANTHER" id="PTHR45655:SF13">
    <property type="entry name" value="SOLUBLE GUANYLATE CYCLASE GCY-32-RELATED"/>
    <property type="match status" value="1"/>
</dbReference>
<dbReference type="Pfam" id="PF00211">
    <property type="entry name" value="Guanylate_cyc"/>
    <property type="match status" value="1"/>
</dbReference>
<dbReference type="Pfam" id="PF07700">
    <property type="entry name" value="HNOB"/>
    <property type="match status" value="1"/>
</dbReference>
<dbReference type="Pfam" id="PF07701">
    <property type="entry name" value="HNOBA"/>
    <property type="match status" value="1"/>
</dbReference>
<dbReference type="SMART" id="SM00044">
    <property type="entry name" value="CYCc"/>
    <property type="match status" value="1"/>
</dbReference>
<dbReference type="SUPFAM" id="SSF111126">
    <property type="entry name" value="Ligand-binding domain in the NO signalling and Golgi transport"/>
    <property type="match status" value="1"/>
</dbReference>
<dbReference type="SUPFAM" id="SSF55073">
    <property type="entry name" value="Nucleotide cyclase"/>
    <property type="match status" value="1"/>
</dbReference>
<dbReference type="PROSITE" id="PS00452">
    <property type="entry name" value="GUANYLATE_CYCLASE_1"/>
    <property type="match status" value="1"/>
</dbReference>
<dbReference type="PROSITE" id="PS50125">
    <property type="entry name" value="GUANYLATE_CYCLASE_2"/>
    <property type="match status" value="1"/>
</dbReference>
<name>GCY35_CAEEL</name>
<gene>
    <name type="primary">gcy-35</name>
    <name type="ORF">T04D3.4</name>
</gene>
<feature type="chain" id="PRO_0000074126" description="Soluble guanylate cyclase gcy-35">
    <location>
        <begin position="1"/>
        <end position="688"/>
    </location>
</feature>
<feature type="domain" description="Guanylate cyclase" evidence="3">
    <location>
        <begin position="424"/>
        <end position="552"/>
    </location>
</feature>
<feature type="region of interest" description="Disordered" evidence="4">
    <location>
        <begin position="644"/>
        <end position="688"/>
    </location>
</feature>
<feature type="coiled-coil region" evidence="2">
    <location>
        <begin position="358"/>
        <end position="401"/>
    </location>
</feature>
<feature type="compositionally biased region" description="Low complexity" evidence="4">
    <location>
        <begin position="646"/>
        <end position="659"/>
    </location>
</feature>
<feature type="binding site" description="proximal binding residue" evidence="8">
    <location>
        <position position="105"/>
    </location>
    <ligand>
        <name>heme</name>
        <dbReference type="ChEBI" id="CHEBI:30413"/>
    </ligand>
    <ligandPart>
        <name>Fe</name>
        <dbReference type="ChEBI" id="CHEBI:18248"/>
    </ligandPart>
</feature>
<feature type="binding site" evidence="1">
    <location>
        <position position="429"/>
    </location>
    <ligand>
        <name>Mg(2+)</name>
        <dbReference type="ChEBI" id="CHEBI:18420"/>
    </ligand>
</feature>
<feature type="binding site" evidence="1">
    <location>
        <position position="473"/>
    </location>
    <ligand>
        <name>Mg(2+)</name>
        <dbReference type="ChEBI" id="CHEBI:18420"/>
    </ligand>
</feature>
<feature type="mutagenesis site" description="Loss of function, suggesting that it acts as an alpha-like subunit." evidence="5">
    <original>D</original>
    <variation>A</variation>
    <location>
        <position position="473"/>
    </location>
</feature>
<feature type="mutagenesis site" description="Little or no effect, suggesting that it acts as an alpha-like subunit." evidence="5">
    <original>N</original>
    <variation>A</variation>
    <location>
        <position position="546"/>
    </location>
</feature>
<sequence>MFGWIHESFRQLVTRKYGKDIWEKIVHMSKFELGTESEIAHYYNDDETLRLVNSMANVIGIPIEEIWEAYGGFLIQFTMETGWDELLRAMAPDLEGFLDSLDSLHYFIDHVVYKTKLRGPSFRCDVQADGTLLLHYYSKRSGLYPIVKGVVREVARRIYDTEVVMKVQERKQEHLDAFVTEHVVFVITQIENANSTQPKSISSKADSQIDLSTGIYEISSSDFSLAFPYHICFDPDLFVEHFGNFIKKTFPNAMRQETRVTDLLELVHPEVPFSYESIKYYKNSLFVFRLKGLGDIVHNANDEAKTVLLKGSMVFIDEGKYILYMCSVNVTTVRELIERNLHLSDMQRHDGTRDVIMLNQSRMSQVELNRTLEETTKKLKKMAQELEIEKQKTDELLCELMPASVADSLRSGKAMDAKEFADCTLLFTDIVTFTNICAMCTPYDVVTLLNDLYLRFDRLVGLHDAYKVETIGDAYMIVGGVPERCENHAERVLNISIGMLMESKLVLSPITHKPIKIRLGVHCGPVVAGVVGIKMPRYCLFGDTVNVANKMESNGIQCKIHVSETGKLNGLKANPSYVFIDRGNTEIRGKGMMYTYFLERNDRKSVWELCSRPRSGEQTIDGYMELHDQSIYQEEGGQQENLTVENGNSAQNNHNNNNNTHHSGRKLMNGSSVDPGSHHIRSPTCTIS</sequence>
<reference key="1">
    <citation type="journal article" date="2004" name="Nature">
        <title>Oxygen sensation and social feeding mediated by a C. elegans guanylate cyclase homologue.</title>
        <authorList>
            <person name="Gray J.M."/>
            <person name="Karow D.S."/>
            <person name="Lu H."/>
            <person name="Chang A.J."/>
            <person name="Chang J.S."/>
            <person name="Ellis R.E."/>
            <person name="Marletta M.A."/>
            <person name="Bargmann C.I."/>
        </authorList>
    </citation>
    <scope>NUCLEOTIDE SEQUENCE [MRNA]</scope>
    <scope>FUNCTION</scope>
    <scope>ACTIVITY REGULATION</scope>
    <scope>TISSUE SPECIFICITY</scope>
</reference>
<reference key="2">
    <citation type="journal article" date="1998" name="Science">
        <title>Genome sequence of the nematode C. elegans: a platform for investigating biology.</title>
        <authorList>
            <consortium name="The C. elegans sequencing consortium"/>
        </authorList>
    </citation>
    <scope>NUCLEOTIDE SEQUENCE [LARGE SCALE GENOMIC DNA]</scope>
    <source>
        <strain>Bristol N2</strain>
    </source>
</reference>
<reference key="3">
    <citation type="journal article" date="2004" name="Curr. Biol.">
        <title>Soluble guanylate cyclases act in neurons exposed to the body fluid to promote C. elegans aggregation behavior.</title>
        <authorList>
            <person name="Cheung B.H.H."/>
            <person name="Arellano-Carbajal F."/>
            <person name="Rybicki I."/>
            <person name="de Bono M."/>
        </authorList>
    </citation>
    <scope>FUNCTION</scope>
    <scope>TISSUE SPECIFICITY</scope>
    <scope>HETERODIMERIZATION</scope>
    <scope>MUTAGENESIS OF ASP-473 AND ASN-546</scope>
</reference>
<reference key="4">
    <citation type="journal article" date="2018" name="PLoS Genet.">
        <title>A neuronal MAP kinase constrains growth of a Caenorhabditis elegans sensory dendrite throughout the life of the organism.</title>
        <authorList>
            <person name="McLachlan I.G."/>
            <person name="Beets I."/>
            <person name="de Bono M."/>
            <person name="Heiman M.G."/>
        </authorList>
    </citation>
    <scope>SUBCELLULAR LOCATION</scope>
</reference>
<organism>
    <name type="scientific">Caenorhabditis elegans</name>
    <dbReference type="NCBI Taxonomy" id="6239"/>
    <lineage>
        <taxon>Eukaryota</taxon>
        <taxon>Metazoa</taxon>
        <taxon>Ecdysozoa</taxon>
        <taxon>Nematoda</taxon>
        <taxon>Chromadorea</taxon>
        <taxon>Rhabditida</taxon>
        <taxon>Rhabditina</taxon>
        <taxon>Rhabditomorpha</taxon>
        <taxon>Rhabditoidea</taxon>
        <taxon>Rhabditidae</taxon>
        <taxon>Peloderinae</taxon>
        <taxon>Caenorhabditis</taxon>
    </lineage>
</organism>
<evidence type="ECO:0000250" key="1"/>
<evidence type="ECO:0000255" key="2"/>
<evidence type="ECO:0000255" key="3">
    <source>
        <dbReference type="PROSITE-ProRule" id="PRU00099"/>
    </source>
</evidence>
<evidence type="ECO:0000256" key="4">
    <source>
        <dbReference type="SAM" id="MobiDB-lite"/>
    </source>
</evidence>
<evidence type="ECO:0000269" key="5">
    <source>
    </source>
</evidence>
<evidence type="ECO:0000269" key="6">
    <source>
    </source>
</evidence>
<evidence type="ECO:0000269" key="7">
    <source>
    </source>
</evidence>
<evidence type="ECO:0000305" key="8"/>
<comment type="function">
    <text evidence="5 6">Plays a central role in social feeding behavior and oxygen sensation by synthesizing 3',5'-cyclic guanosine monophosphate (cGMP) from GTP. Oxygen, which binds to its heme-binding sites, probably regulates social behavior by modulating its activity. cGMP is a common second messenger in sensory transduction and is implicated in oxygen sensation. Indeed, C.elegans exhibits a strong behavioral preference for 5-12% oxygen, avoiding higher and lower oxygen levels; a higher level of oxygen inducing a naturally polymorphic social feeding behavior. Involved in avoidance of hyperoxia and for oxygen-induced aggregation and bordering, probably by mediating oxygen-sensing in URX, AQR and PQR sensory neurons.</text>
</comment>
<comment type="catalytic activity">
    <reaction>
        <text>GTP = 3',5'-cyclic GMP + diphosphate</text>
        <dbReference type="Rhea" id="RHEA:13665"/>
        <dbReference type="ChEBI" id="CHEBI:33019"/>
        <dbReference type="ChEBI" id="CHEBI:37565"/>
        <dbReference type="ChEBI" id="CHEBI:57746"/>
        <dbReference type="EC" id="4.6.1.2"/>
    </reaction>
</comment>
<comment type="cofactor">
    <cofactor evidence="8">
        <name>heme</name>
        <dbReference type="ChEBI" id="CHEBI:30413"/>
    </cofactor>
    <text evidence="8">Binds 1 or 2 heme groups per heterodimer.</text>
</comment>
<comment type="activity regulation">
    <text evidence="6">Regulated by molecular oxygen, which binds to the heme binding site. Probably not activated by nitric oxide (NO).</text>
</comment>
<comment type="subunit">
    <text>Heterodimer; heterodimerizes with gcy-36, and possibly with other soluble guanylate cyclases.</text>
</comment>
<comment type="subcellular location">
    <subcellularLocation>
        <location evidence="8">Cytoplasm</location>
    </subcellularLocation>
    <subcellularLocation>
        <location evidence="7">Cell projection</location>
        <location evidence="7">Dendrite</location>
    </subcellularLocation>
    <text evidence="7">Enriched localization at the URX dendrite ending.</text>
</comment>
<comment type="tissue specificity">
    <text evidence="5 6">Expressed in URX, AQR and PQR neurons. Also expressed in ALN, SDQ and BDU neurons, and variably in AVM, PLM and PLN neurons, pharyngeal and body wall muscles, and the excretory cell.</text>
</comment>
<comment type="miscellaneous">
    <text>There are two types of guanylate cyclases: soluble forms and membrane-associated receptor forms.</text>
</comment>
<comment type="similarity">
    <text evidence="3">Belongs to the adenylyl cyclase class-4/guanylyl cyclase family.</text>
</comment>
<keyword id="KW-0085">Behavior</keyword>
<keyword id="KW-0966">Cell projection</keyword>
<keyword id="KW-0141">cGMP biosynthesis</keyword>
<keyword id="KW-0175">Coiled coil</keyword>
<keyword id="KW-0963">Cytoplasm</keyword>
<keyword id="KW-0342">GTP-binding</keyword>
<keyword id="KW-0349">Heme</keyword>
<keyword id="KW-0408">Iron</keyword>
<keyword id="KW-0456">Lyase</keyword>
<keyword id="KW-0460">Magnesium</keyword>
<keyword id="KW-0479">Metal-binding</keyword>
<keyword id="KW-0547">Nucleotide-binding</keyword>
<keyword id="KW-1185">Reference proteome</keyword>
<proteinExistence type="evidence at protein level"/>